<sequence length="512" mass="60357">MKTYKPYRHQLRRSLFASTIFPVFMVMIIGLISFYAIYIWVEHRTIHQHTYQTQTELQRIDKHFHTFVTQQQKQWRHVDLSHPADITKMKRQLLKQVHQQPAILYYDLKGSSQSFTNNYEQLDTTKMYLISKYRIDFKDDTYILKIYMSSTPLLKNIKKNSGQSALIVDSYDTVLYTNDDRFSIGQKYQPPQFGFMNESLKLNSHHAHLIIYKDIHETIEDGIALLVVMGVVLILLVIFGYISADRMAKRQSEDIEAIVRKIDDAKNRHLGSYEPLKKHSELEEINNYIYDLFESNEQLIQSIEQTERRLRDIQLKEIERQFQPHFLFNTMQTIQYLIPLSPKVAQTVIQQLSQMLRYSLRTASHTVKLAEELSYIEQYVAIQNIRFDDMIQLYIDATEGVQHQTIGKMMLQPLVENAIKHGRDSEPLKITIRIRLTKRKLHILVHDNGIGMSPSHLEHVRQSLHHDVFDTTHLGLNHLHNRAMIQYGTYARLHIFSRSQQGTLMCYQIPLV</sequence>
<proteinExistence type="inferred from homology"/>
<organism>
    <name type="scientific">Staphylococcus epidermidis (strain ATCC 12228 / FDA PCI 1200)</name>
    <dbReference type="NCBI Taxonomy" id="176280"/>
    <lineage>
        <taxon>Bacteria</taxon>
        <taxon>Bacillati</taxon>
        <taxon>Bacillota</taxon>
        <taxon>Bacilli</taxon>
        <taxon>Bacillales</taxon>
        <taxon>Staphylococcaceae</taxon>
        <taxon>Staphylococcus</taxon>
    </lineage>
</organism>
<comment type="function">
    <text evidence="1">Probable member of the two-component regulatory system SE_0166/SE_0165. May activate SE_0165 by phosphorylation (By similarity).</text>
</comment>
<comment type="catalytic activity">
    <reaction>
        <text>ATP + protein L-histidine = ADP + protein N-phospho-L-histidine.</text>
        <dbReference type="EC" id="2.7.13.3"/>
    </reaction>
</comment>
<comment type="subcellular location">
    <subcellularLocation>
        <location evidence="3">Cell membrane</location>
        <topology evidence="3">Multi-pass membrane protein</topology>
    </subcellularLocation>
</comment>
<comment type="PTM">
    <text evidence="1">Autophosphorylated.</text>
</comment>
<keyword id="KW-0067">ATP-binding</keyword>
<keyword id="KW-1003">Cell membrane</keyword>
<keyword id="KW-0418">Kinase</keyword>
<keyword id="KW-0472">Membrane</keyword>
<keyword id="KW-0547">Nucleotide-binding</keyword>
<keyword id="KW-0597">Phosphoprotein</keyword>
<keyword id="KW-0808">Transferase</keyword>
<keyword id="KW-0812">Transmembrane</keyword>
<keyword id="KW-1133">Transmembrane helix</keyword>
<keyword id="KW-0902">Two-component regulatory system</keyword>
<protein>
    <recommendedName>
        <fullName>Uncharacterized sensor-like histidine kinase SE_0166</fullName>
        <ecNumber>2.7.13.3</ecNumber>
    </recommendedName>
</protein>
<name>Y166_STAES</name>
<feature type="chain" id="PRO_0000299128" description="Uncharacterized sensor-like histidine kinase SE_0166">
    <location>
        <begin position="1"/>
        <end position="512"/>
    </location>
</feature>
<feature type="transmembrane region" description="Helical" evidence="2">
    <location>
        <begin position="20"/>
        <end position="40"/>
    </location>
</feature>
<feature type="transmembrane region" description="Helical" evidence="2">
    <location>
        <begin position="222"/>
        <end position="242"/>
    </location>
</feature>
<feature type="domain" description="Histidine kinase">
    <location>
        <begin position="297"/>
        <end position="512"/>
    </location>
</feature>
<feature type="modified residue" description="Phosphohistidine; by autocatalysis" evidence="1">
    <location>
        <position position="325"/>
    </location>
</feature>
<dbReference type="EC" id="2.7.13.3"/>
<dbReference type="EMBL" id="AE015929">
    <property type="protein sequence ID" value="AAO03763.1"/>
    <property type="molecule type" value="Genomic_DNA"/>
</dbReference>
<dbReference type="RefSeq" id="NP_763721.1">
    <property type="nucleotide sequence ID" value="NC_004461.1"/>
</dbReference>
<dbReference type="RefSeq" id="WP_002469221.1">
    <property type="nucleotide sequence ID" value="NZ_WBME01000072.1"/>
</dbReference>
<dbReference type="SMR" id="Q8CU03"/>
<dbReference type="KEGG" id="sep:SE_0166"/>
<dbReference type="PATRIC" id="fig|176280.10.peg.152"/>
<dbReference type="eggNOG" id="COG2972">
    <property type="taxonomic scope" value="Bacteria"/>
</dbReference>
<dbReference type="HOGENOM" id="CLU_525720_0_0_9"/>
<dbReference type="OrthoDB" id="9776552at2"/>
<dbReference type="Proteomes" id="UP000001411">
    <property type="component" value="Chromosome"/>
</dbReference>
<dbReference type="GO" id="GO:0005886">
    <property type="term" value="C:plasma membrane"/>
    <property type="evidence" value="ECO:0007669"/>
    <property type="project" value="UniProtKB-SubCell"/>
</dbReference>
<dbReference type="GO" id="GO:0005524">
    <property type="term" value="F:ATP binding"/>
    <property type="evidence" value="ECO:0007669"/>
    <property type="project" value="UniProtKB-KW"/>
</dbReference>
<dbReference type="GO" id="GO:0000155">
    <property type="term" value="F:phosphorelay sensor kinase activity"/>
    <property type="evidence" value="ECO:0007669"/>
    <property type="project" value="InterPro"/>
</dbReference>
<dbReference type="Gene3D" id="3.30.565.10">
    <property type="entry name" value="Histidine kinase-like ATPase, C-terminal domain"/>
    <property type="match status" value="1"/>
</dbReference>
<dbReference type="InterPro" id="IPR050640">
    <property type="entry name" value="Bact_2-comp_sensor_kinase"/>
</dbReference>
<dbReference type="InterPro" id="IPR036890">
    <property type="entry name" value="HATPase_C_sf"/>
</dbReference>
<dbReference type="InterPro" id="IPR010559">
    <property type="entry name" value="Sig_transdc_His_kin_internal"/>
</dbReference>
<dbReference type="PANTHER" id="PTHR34220">
    <property type="entry name" value="SENSOR HISTIDINE KINASE YPDA"/>
    <property type="match status" value="1"/>
</dbReference>
<dbReference type="PANTHER" id="PTHR34220:SF11">
    <property type="entry name" value="SENSOR PROTEIN KINASE HPTS"/>
    <property type="match status" value="1"/>
</dbReference>
<dbReference type="Pfam" id="PF02518">
    <property type="entry name" value="HATPase_c"/>
    <property type="match status" value="1"/>
</dbReference>
<dbReference type="Pfam" id="PF06580">
    <property type="entry name" value="His_kinase"/>
    <property type="match status" value="1"/>
</dbReference>
<dbReference type="SUPFAM" id="SSF55874">
    <property type="entry name" value="ATPase domain of HSP90 chaperone/DNA topoisomerase II/histidine kinase"/>
    <property type="match status" value="1"/>
</dbReference>
<gene>
    <name type="ordered locus">SE_0166</name>
</gene>
<accession>Q8CU03</accession>
<reference key="1">
    <citation type="journal article" date="2003" name="Mol. Microbiol.">
        <title>Genome-based analysis of virulence genes in a non-biofilm-forming Staphylococcus epidermidis strain (ATCC 12228).</title>
        <authorList>
            <person name="Zhang Y.-Q."/>
            <person name="Ren S.-X."/>
            <person name="Li H.-L."/>
            <person name="Wang Y.-X."/>
            <person name="Fu G."/>
            <person name="Yang J."/>
            <person name="Qin Z.-Q."/>
            <person name="Miao Y.-G."/>
            <person name="Wang W.-Y."/>
            <person name="Chen R.-S."/>
            <person name="Shen Y."/>
            <person name="Chen Z."/>
            <person name="Yuan Z.-H."/>
            <person name="Zhao G.-P."/>
            <person name="Qu D."/>
            <person name="Danchin A."/>
            <person name="Wen Y.-M."/>
        </authorList>
    </citation>
    <scope>NUCLEOTIDE SEQUENCE [LARGE SCALE GENOMIC DNA]</scope>
    <source>
        <strain>ATCC 12228 / FDA PCI 1200</strain>
    </source>
</reference>
<evidence type="ECO:0000250" key="1"/>
<evidence type="ECO:0000255" key="2"/>
<evidence type="ECO:0000305" key="3"/>